<keyword id="KW-0071">Autoinducer synthesis</keyword>
<keyword id="KW-0408">Iron</keyword>
<keyword id="KW-0456">Lyase</keyword>
<keyword id="KW-0479">Metal-binding</keyword>
<keyword id="KW-0673">Quorum sensing</keyword>
<organism>
    <name type="scientific">Neisseria meningitidis serogroup A / serotype 4A (strain DSM 15465 / Z2491)</name>
    <dbReference type="NCBI Taxonomy" id="122587"/>
    <lineage>
        <taxon>Bacteria</taxon>
        <taxon>Pseudomonadati</taxon>
        <taxon>Pseudomonadota</taxon>
        <taxon>Betaproteobacteria</taxon>
        <taxon>Neisseriales</taxon>
        <taxon>Neisseriaceae</taxon>
        <taxon>Neisseria</taxon>
    </lineage>
</organism>
<dbReference type="EC" id="4.4.1.21" evidence="1"/>
<dbReference type="EMBL" id="AL157959">
    <property type="protein sequence ID" value="CAM07745.1"/>
    <property type="molecule type" value="Genomic_DNA"/>
</dbReference>
<dbReference type="PIR" id="G81963">
    <property type="entry name" value="G81963"/>
</dbReference>
<dbReference type="RefSeq" id="WP_002226759.1">
    <property type="nucleotide sequence ID" value="NC_003116.1"/>
</dbReference>
<dbReference type="SMR" id="Q9JWB0"/>
<dbReference type="EnsemblBacteria" id="CAM07745">
    <property type="protein sequence ID" value="CAM07745"/>
    <property type="gene ID" value="NMA0463"/>
</dbReference>
<dbReference type="KEGG" id="nma:NMA0463"/>
<dbReference type="HOGENOM" id="CLU_107531_2_0_4"/>
<dbReference type="Proteomes" id="UP000000626">
    <property type="component" value="Chromosome"/>
</dbReference>
<dbReference type="GO" id="GO:0005506">
    <property type="term" value="F:iron ion binding"/>
    <property type="evidence" value="ECO:0007669"/>
    <property type="project" value="InterPro"/>
</dbReference>
<dbReference type="GO" id="GO:0043768">
    <property type="term" value="F:S-ribosylhomocysteine lyase activity"/>
    <property type="evidence" value="ECO:0007669"/>
    <property type="project" value="UniProtKB-UniRule"/>
</dbReference>
<dbReference type="GO" id="GO:0009372">
    <property type="term" value="P:quorum sensing"/>
    <property type="evidence" value="ECO:0007669"/>
    <property type="project" value="UniProtKB-UniRule"/>
</dbReference>
<dbReference type="FunFam" id="3.30.1360.80:FF:000001">
    <property type="entry name" value="S-ribosylhomocysteine lyase"/>
    <property type="match status" value="1"/>
</dbReference>
<dbReference type="Gene3D" id="3.30.1360.80">
    <property type="entry name" value="S-ribosylhomocysteinase (LuxS)"/>
    <property type="match status" value="1"/>
</dbReference>
<dbReference type="HAMAP" id="MF_00091">
    <property type="entry name" value="LuxS"/>
    <property type="match status" value="1"/>
</dbReference>
<dbReference type="InterPro" id="IPR037005">
    <property type="entry name" value="LuxS_sf"/>
</dbReference>
<dbReference type="InterPro" id="IPR011249">
    <property type="entry name" value="Metalloenz_LuxS/M16"/>
</dbReference>
<dbReference type="InterPro" id="IPR003815">
    <property type="entry name" value="S-ribosylhomocysteinase"/>
</dbReference>
<dbReference type="NCBIfam" id="NF002602">
    <property type="entry name" value="PRK02260.1-2"/>
    <property type="match status" value="1"/>
</dbReference>
<dbReference type="PANTHER" id="PTHR35799">
    <property type="entry name" value="S-RIBOSYLHOMOCYSTEINE LYASE"/>
    <property type="match status" value="1"/>
</dbReference>
<dbReference type="PANTHER" id="PTHR35799:SF1">
    <property type="entry name" value="S-RIBOSYLHOMOCYSTEINE LYASE"/>
    <property type="match status" value="1"/>
</dbReference>
<dbReference type="Pfam" id="PF02664">
    <property type="entry name" value="LuxS"/>
    <property type="match status" value="1"/>
</dbReference>
<dbReference type="PIRSF" id="PIRSF006160">
    <property type="entry name" value="AI2"/>
    <property type="match status" value="1"/>
</dbReference>
<dbReference type="PRINTS" id="PR01487">
    <property type="entry name" value="LUXSPROTEIN"/>
</dbReference>
<dbReference type="SUPFAM" id="SSF63411">
    <property type="entry name" value="LuxS/MPP-like metallohydrolase"/>
    <property type="match status" value="1"/>
</dbReference>
<sequence>MPLLDSFKVDHTRMHAPAVRVAKTMTTPKGDTITVFDLRFCVPNKEILPEKGIHTLEHLFAGFMRDHLNGNGVEIIDISPMGCRTGFYMSLIGTPSEQQVADAWLASMQDVLNVKDQSKIPELNEYQCGTYQMHSLAEAQQIAQNVLARKVAVNKNEELTLDEGLLNA</sequence>
<evidence type="ECO:0000255" key="1">
    <source>
        <dbReference type="HAMAP-Rule" id="MF_00091"/>
    </source>
</evidence>
<proteinExistence type="inferred from homology"/>
<name>LUXS_NEIMA</name>
<comment type="function">
    <text evidence="1">Involved in the synthesis of autoinducer 2 (AI-2) which is secreted by bacteria and is used to communicate both the cell density and the metabolic potential of the environment. The regulation of gene expression in response to changes in cell density is called quorum sensing. Catalyzes the transformation of S-ribosylhomocysteine (RHC) to homocysteine (HC) and 4,5-dihydroxy-2,3-pentadione (DPD).</text>
</comment>
<comment type="catalytic activity">
    <reaction evidence="1">
        <text>S-(5-deoxy-D-ribos-5-yl)-L-homocysteine = (S)-4,5-dihydroxypentane-2,3-dione + L-homocysteine</text>
        <dbReference type="Rhea" id="RHEA:17753"/>
        <dbReference type="ChEBI" id="CHEBI:29484"/>
        <dbReference type="ChEBI" id="CHEBI:58195"/>
        <dbReference type="ChEBI" id="CHEBI:58199"/>
        <dbReference type="EC" id="4.4.1.21"/>
    </reaction>
</comment>
<comment type="cofactor">
    <cofactor evidence="1">
        <name>Fe cation</name>
        <dbReference type="ChEBI" id="CHEBI:24875"/>
    </cofactor>
    <text evidence="1">Binds 1 Fe cation per subunit.</text>
</comment>
<comment type="subunit">
    <text evidence="1">Homodimer.</text>
</comment>
<comment type="similarity">
    <text evidence="1">Belongs to the LuxS family.</text>
</comment>
<gene>
    <name evidence="1" type="primary">luxS</name>
    <name type="ordered locus">NMA0463</name>
</gene>
<protein>
    <recommendedName>
        <fullName evidence="1">S-ribosylhomocysteine lyase</fullName>
        <ecNumber evidence="1">4.4.1.21</ecNumber>
    </recommendedName>
    <alternativeName>
        <fullName evidence="1">AI-2 synthesis protein</fullName>
    </alternativeName>
    <alternativeName>
        <fullName evidence="1">Autoinducer-2 production protein LuxS</fullName>
    </alternativeName>
</protein>
<feature type="chain" id="PRO_0000172239" description="S-ribosylhomocysteine lyase">
    <location>
        <begin position="1"/>
        <end position="168"/>
    </location>
</feature>
<feature type="binding site" evidence="1">
    <location>
        <position position="54"/>
    </location>
    <ligand>
        <name>Fe cation</name>
        <dbReference type="ChEBI" id="CHEBI:24875"/>
    </ligand>
</feature>
<feature type="binding site" evidence="1">
    <location>
        <position position="58"/>
    </location>
    <ligand>
        <name>Fe cation</name>
        <dbReference type="ChEBI" id="CHEBI:24875"/>
    </ligand>
</feature>
<feature type="binding site" evidence="1">
    <location>
        <position position="128"/>
    </location>
    <ligand>
        <name>Fe cation</name>
        <dbReference type="ChEBI" id="CHEBI:24875"/>
    </ligand>
</feature>
<accession>Q9JWB0</accession>
<accession>A1IPS4</accession>
<reference key="1">
    <citation type="journal article" date="2000" name="Nature">
        <title>Complete DNA sequence of a serogroup A strain of Neisseria meningitidis Z2491.</title>
        <authorList>
            <person name="Parkhill J."/>
            <person name="Achtman M."/>
            <person name="James K.D."/>
            <person name="Bentley S.D."/>
            <person name="Churcher C.M."/>
            <person name="Klee S.R."/>
            <person name="Morelli G."/>
            <person name="Basham D."/>
            <person name="Brown D."/>
            <person name="Chillingworth T."/>
            <person name="Davies R.M."/>
            <person name="Davis P."/>
            <person name="Devlin K."/>
            <person name="Feltwell T."/>
            <person name="Hamlin N."/>
            <person name="Holroyd S."/>
            <person name="Jagels K."/>
            <person name="Leather S."/>
            <person name="Moule S."/>
            <person name="Mungall K.L."/>
            <person name="Quail M.A."/>
            <person name="Rajandream M.A."/>
            <person name="Rutherford K.M."/>
            <person name="Simmonds M."/>
            <person name="Skelton J."/>
            <person name="Whitehead S."/>
            <person name="Spratt B.G."/>
            <person name="Barrell B.G."/>
        </authorList>
    </citation>
    <scope>NUCLEOTIDE SEQUENCE [LARGE SCALE GENOMIC DNA]</scope>
    <source>
        <strain>DSM 15465 / Z2491</strain>
    </source>
</reference>